<accession>B2IK62</accession>
<name>RL3_BEII9</name>
<organism>
    <name type="scientific">Beijerinckia indica subsp. indica (strain ATCC 9039 / DSM 1715 / NCIMB 8712)</name>
    <dbReference type="NCBI Taxonomy" id="395963"/>
    <lineage>
        <taxon>Bacteria</taxon>
        <taxon>Pseudomonadati</taxon>
        <taxon>Pseudomonadota</taxon>
        <taxon>Alphaproteobacteria</taxon>
        <taxon>Hyphomicrobiales</taxon>
        <taxon>Beijerinckiaceae</taxon>
        <taxon>Beijerinckia</taxon>
    </lineage>
</organism>
<reference key="1">
    <citation type="journal article" date="2010" name="J. Bacteriol.">
        <title>Complete genome sequence of Beijerinckia indica subsp. indica.</title>
        <authorList>
            <person name="Tamas I."/>
            <person name="Dedysh S.N."/>
            <person name="Liesack W."/>
            <person name="Stott M.B."/>
            <person name="Alam M."/>
            <person name="Murrell J.C."/>
            <person name="Dunfield P.F."/>
        </authorList>
    </citation>
    <scope>NUCLEOTIDE SEQUENCE [LARGE SCALE GENOMIC DNA]</scope>
    <source>
        <strain>ATCC 9039 / DSM 1715 / NCIMB 8712</strain>
    </source>
</reference>
<evidence type="ECO:0000255" key="1">
    <source>
        <dbReference type="HAMAP-Rule" id="MF_01325"/>
    </source>
</evidence>
<evidence type="ECO:0000256" key="2">
    <source>
        <dbReference type="SAM" id="MobiDB-lite"/>
    </source>
</evidence>
<evidence type="ECO:0000305" key="3"/>
<comment type="function">
    <text evidence="1">One of the primary rRNA binding proteins, it binds directly near the 3'-end of the 23S rRNA, where it nucleates assembly of the 50S subunit.</text>
</comment>
<comment type="subunit">
    <text evidence="1">Part of the 50S ribosomal subunit. Forms a cluster with proteins L14 and L19.</text>
</comment>
<comment type="PTM">
    <text evidence="1">Methylated by PrmB.</text>
</comment>
<comment type="similarity">
    <text evidence="1">Belongs to the universal ribosomal protein uL3 family.</text>
</comment>
<keyword id="KW-0488">Methylation</keyword>
<keyword id="KW-1185">Reference proteome</keyword>
<keyword id="KW-0687">Ribonucleoprotein</keyword>
<keyword id="KW-0689">Ribosomal protein</keyword>
<keyword id="KW-0694">RNA-binding</keyword>
<keyword id="KW-0699">rRNA-binding</keyword>
<feature type="chain" id="PRO_1000141827" description="Large ribosomal subunit protein uL3">
    <location>
        <begin position="1"/>
        <end position="240"/>
    </location>
</feature>
<feature type="region of interest" description="Disordered" evidence="2">
    <location>
        <begin position="138"/>
        <end position="158"/>
    </location>
</feature>
<feature type="region of interest" description="Disordered" evidence="2">
    <location>
        <begin position="215"/>
        <end position="240"/>
    </location>
</feature>
<feature type="modified residue" description="N5-methylglutamine" evidence="1">
    <location>
        <position position="151"/>
    </location>
</feature>
<sequence>MRSGVIAQKLGMTRVFTDAGEHIPVTVLKLDGCQVVGHRTKEQNGYVAVQLGIGRAKVKNVSKAERGRFAVAKVEPKLKLAEFRVDDATLLPIGAEITADHFVVGQFVDVTGTSTGKGFAGAMKRWNFGGLRATHGVSISHRSHGSTGGRQDPGKTFKNKKMAGHLGTERVTTLNLRVVQTDVERGLILVEGAVPGTAGGWIYVRDAVKKHLPKEAPLPGKFRLANEGAEPAPATESAEG</sequence>
<gene>
    <name evidence="1" type="primary">rplC</name>
    <name type="ordered locus">Bind_1354</name>
</gene>
<proteinExistence type="inferred from homology"/>
<dbReference type="EMBL" id="CP001016">
    <property type="protein sequence ID" value="ACB94994.1"/>
    <property type="molecule type" value="Genomic_DNA"/>
</dbReference>
<dbReference type="RefSeq" id="WP_012384351.1">
    <property type="nucleotide sequence ID" value="NC_010581.1"/>
</dbReference>
<dbReference type="SMR" id="B2IK62"/>
<dbReference type="STRING" id="395963.Bind_1354"/>
<dbReference type="KEGG" id="bid:Bind_1354"/>
<dbReference type="eggNOG" id="COG0087">
    <property type="taxonomic scope" value="Bacteria"/>
</dbReference>
<dbReference type="HOGENOM" id="CLU_044142_2_0_5"/>
<dbReference type="OrthoDB" id="9806135at2"/>
<dbReference type="Proteomes" id="UP000001695">
    <property type="component" value="Chromosome"/>
</dbReference>
<dbReference type="GO" id="GO:0022625">
    <property type="term" value="C:cytosolic large ribosomal subunit"/>
    <property type="evidence" value="ECO:0007669"/>
    <property type="project" value="TreeGrafter"/>
</dbReference>
<dbReference type="GO" id="GO:0019843">
    <property type="term" value="F:rRNA binding"/>
    <property type="evidence" value="ECO:0007669"/>
    <property type="project" value="UniProtKB-UniRule"/>
</dbReference>
<dbReference type="GO" id="GO:0003735">
    <property type="term" value="F:structural constituent of ribosome"/>
    <property type="evidence" value="ECO:0007669"/>
    <property type="project" value="InterPro"/>
</dbReference>
<dbReference type="GO" id="GO:0006412">
    <property type="term" value="P:translation"/>
    <property type="evidence" value="ECO:0007669"/>
    <property type="project" value="UniProtKB-UniRule"/>
</dbReference>
<dbReference type="FunFam" id="2.40.30.10:FF:000004">
    <property type="entry name" value="50S ribosomal protein L3"/>
    <property type="match status" value="1"/>
</dbReference>
<dbReference type="FunFam" id="3.30.160.810:FF:000001">
    <property type="entry name" value="50S ribosomal protein L3"/>
    <property type="match status" value="1"/>
</dbReference>
<dbReference type="Gene3D" id="3.30.160.810">
    <property type="match status" value="1"/>
</dbReference>
<dbReference type="Gene3D" id="2.40.30.10">
    <property type="entry name" value="Translation factors"/>
    <property type="match status" value="1"/>
</dbReference>
<dbReference type="HAMAP" id="MF_01325_B">
    <property type="entry name" value="Ribosomal_uL3_B"/>
    <property type="match status" value="1"/>
</dbReference>
<dbReference type="InterPro" id="IPR000597">
    <property type="entry name" value="Ribosomal_uL3"/>
</dbReference>
<dbReference type="InterPro" id="IPR019927">
    <property type="entry name" value="Ribosomal_uL3_bac/org-type"/>
</dbReference>
<dbReference type="InterPro" id="IPR019926">
    <property type="entry name" value="Ribosomal_uL3_CS"/>
</dbReference>
<dbReference type="InterPro" id="IPR009000">
    <property type="entry name" value="Transl_B-barrel_sf"/>
</dbReference>
<dbReference type="NCBIfam" id="TIGR03625">
    <property type="entry name" value="L3_bact"/>
    <property type="match status" value="1"/>
</dbReference>
<dbReference type="PANTHER" id="PTHR11229">
    <property type="entry name" value="50S RIBOSOMAL PROTEIN L3"/>
    <property type="match status" value="1"/>
</dbReference>
<dbReference type="PANTHER" id="PTHR11229:SF16">
    <property type="entry name" value="LARGE RIBOSOMAL SUBUNIT PROTEIN UL3C"/>
    <property type="match status" value="1"/>
</dbReference>
<dbReference type="Pfam" id="PF00297">
    <property type="entry name" value="Ribosomal_L3"/>
    <property type="match status" value="1"/>
</dbReference>
<dbReference type="SUPFAM" id="SSF50447">
    <property type="entry name" value="Translation proteins"/>
    <property type="match status" value="1"/>
</dbReference>
<dbReference type="PROSITE" id="PS00474">
    <property type="entry name" value="RIBOSOMAL_L3"/>
    <property type="match status" value="1"/>
</dbReference>
<protein>
    <recommendedName>
        <fullName evidence="1">Large ribosomal subunit protein uL3</fullName>
    </recommendedName>
    <alternativeName>
        <fullName evidence="3">50S ribosomal protein L3</fullName>
    </alternativeName>
</protein>